<comment type="function">
    <text>This molybdenum-iron protein is part of the nitrogenase complex that catalyzes the key enzymatic reactions in nitrogen fixation.</text>
</comment>
<comment type="catalytic activity">
    <reaction>
        <text>N2 + 8 reduced [2Fe-2S]-[ferredoxin] + 16 ATP + 16 H2O = H2 + 8 oxidized [2Fe-2S]-[ferredoxin] + 2 NH4(+) + 16 ADP + 16 phosphate + 6 H(+)</text>
        <dbReference type="Rhea" id="RHEA:21448"/>
        <dbReference type="Rhea" id="RHEA-COMP:10000"/>
        <dbReference type="Rhea" id="RHEA-COMP:10001"/>
        <dbReference type="ChEBI" id="CHEBI:15377"/>
        <dbReference type="ChEBI" id="CHEBI:15378"/>
        <dbReference type="ChEBI" id="CHEBI:17997"/>
        <dbReference type="ChEBI" id="CHEBI:18276"/>
        <dbReference type="ChEBI" id="CHEBI:28938"/>
        <dbReference type="ChEBI" id="CHEBI:30616"/>
        <dbReference type="ChEBI" id="CHEBI:33737"/>
        <dbReference type="ChEBI" id="CHEBI:33738"/>
        <dbReference type="ChEBI" id="CHEBI:43474"/>
        <dbReference type="ChEBI" id="CHEBI:456216"/>
        <dbReference type="EC" id="1.18.6.1"/>
    </reaction>
</comment>
<comment type="cofactor">
    <cofactor evidence="1">
        <name>[8Fe-7S] cluster</name>
        <dbReference type="ChEBI" id="CHEBI:21143"/>
    </cofactor>
    <text evidence="1">Binds 1 [8Fe-7S] cluster per heterodimer.</text>
</comment>
<comment type="subunit">
    <text>Tetramer of two alpha and two beta chains. Forms complex with the iron protein (nitrogenase component 2).</text>
</comment>
<comment type="similarity">
    <text evidence="2">Belongs to the NifD/NifK/NifE/NifN family.</text>
</comment>
<accession>Q55030</accession>
<accession>B7JWY4</accession>
<reference key="1">
    <citation type="submission" date="1995-03" db="EMBL/GenBank/DDBJ databases">
        <title>Synechococcus RF-1 nifHDK sequences.</title>
        <authorList>
            <person name="Chen H.M."/>
        </authorList>
    </citation>
    <scope>NUCLEOTIDE SEQUENCE [GENOMIC DNA]</scope>
</reference>
<reference key="2">
    <citation type="journal article" date="2011" name="MBio">
        <title>Novel metabolic attributes of the genus Cyanothece, comprising a group of unicellular nitrogen-fixing Cyanobacteria.</title>
        <authorList>
            <person name="Bandyopadhyay A."/>
            <person name="Elvitigala T."/>
            <person name="Welsh E."/>
            <person name="Stockel J."/>
            <person name="Liberton M."/>
            <person name="Min H."/>
            <person name="Sherman L.A."/>
            <person name="Pakrasi H.B."/>
        </authorList>
    </citation>
    <scope>NUCLEOTIDE SEQUENCE [LARGE SCALE GENOMIC DNA]</scope>
    <source>
        <strain>PCC 8801 / RF-1</strain>
    </source>
</reference>
<sequence>MSQNIDKIQDHVELFHQPEYQELFENKKALQGMASDEKVAEIAEWTKTWEYREKNFAREALTINPAKACQPLGAILAAVGFEGTLPFVHGSQGCVAYFRTHFTRHFKEPFSGVSSSMTEDAAVFGGLKNMIEGLQNAYSLYQPKMIAVCTTCMAEVIGDDLGSFIGNAKADGSVPQDFPVPFAHTPSFVGSHITGYDNMMKAILLNLTDGKKPTTSNGKVNFIPGFETYVGNLRELKHLTSAMGVDATILGDNELYLDSPNDGEFKMYQGGTTLEEGADAINATKTIALQTYPTVKTLEYIEKEWQQPTATYRPWGIKGTDEFVMALSELTGNPVPPELELERGRAVDAMTDSHAWLHGKKAAIYGDPDLVMGMLQFMLEMGVEPVHVLVHNSTTEFEEEAKALLASSPYGQKATVWGGKDLWHLRSLLFTEPVDFLIGNSYGKYLWRDTKIPLIRIGYPIFDRHHLHRYSTIGYNGAINLLNWIVNGLFEEIDRNTNIPSKTDISFDLVR</sequence>
<gene>
    <name type="primary">nifK</name>
    <name type="ordered locus">PCC8801_1787</name>
</gene>
<name>NIFK_RIPO1</name>
<feature type="chain" id="PRO_0000153109" description="Nitrogenase molybdenum-iron protein beta chain">
    <location>
        <begin position="1"/>
        <end position="511"/>
    </location>
</feature>
<feature type="binding site" evidence="1">
    <location>
        <position position="69"/>
    </location>
    <ligand>
        <name>[8Fe-7S] cluster</name>
        <dbReference type="ChEBI" id="CHEBI:21143"/>
        <note>ligand shared with alpha chain</note>
    </ligand>
</feature>
<feature type="binding site" evidence="1">
    <location>
        <position position="94"/>
    </location>
    <ligand>
        <name>[8Fe-7S] cluster</name>
        <dbReference type="ChEBI" id="CHEBI:21143"/>
        <note>ligand shared with alpha chain</note>
    </ligand>
</feature>
<feature type="binding site" evidence="1">
    <location>
        <position position="152"/>
    </location>
    <ligand>
        <name>[8Fe-7S] cluster</name>
        <dbReference type="ChEBI" id="CHEBI:21143"/>
        <note>ligand shared with alpha chain</note>
    </ligand>
</feature>
<feature type="binding site" evidence="1">
    <location>
        <position position="187"/>
    </location>
    <ligand>
        <name>[8Fe-7S] cluster</name>
        <dbReference type="ChEBI" id="CHEBI:21143"/>
        <note>ligand shared with alpha chain</note>
    </ligand>
</feature>
<feature type="sequence conflict" description="In Ref. 1; AAA64845." evidence="2" ref="1">
    <original>N</original>
    <variation>K</variation>
    <location>
        <position position="4"/>
    </location>
</feature>
<feature type="sequence conflict" description="In Ref. 1; AAA64845." evidence="2" ref="1">
    <original>Q</original>
    <variation>K</variation>
    <location>
        <position position="176"/>
    </location>
</feature>
<feature type="sequence conflict" description="In Ref. 1; AAA64845." evidence="2" ref="1">
    <original>D</original>
    <variation>Y</variation>
    <location>
        <position position="421"/>
    </location>
</feature>
<dbReference type="EC" id="1.18.6.1"/>
<dbReference type="EMBL" id="U22146">
    <property type="protein sequence ID" value="AAA64845.1"/>
    <property type="molecule type" value="Genomic_DNA"/>
</dbReference>
<dbReference type="EMBL" id="CP001287">
    <property type="protein sequence ID" value="ACK65833.1"/>
    <property type="molecule type" value="Genomic_DNA"/>
</dbReference>
<dbReference type="RefSeq" id="WP_012595106.1">
    <property type="nucleotide sequence ID" value="NC_011726.1"/>
</dbReference>
<dbReference type="SMR" id="Q55030"/>
<dbReference type="STRING" id="41431.PCC8801_1787"/>
<dbReference type="KEGG" id="cyp:PCC8801_1787"/>
<dbReference type="eggNOG" id="COG2710">
    <property type="taxonomic scope" value="Bacteria"/>
</dbReference>
<dbReference type="HOGENOM" id="CLU_025876_2_0_3"/>
<dbReference type="OrthoDB" id="9800746at2"/>
<dbReference type="Proteomes" id="UP000008204">
    <property type="component" value="Chromosome"/>
</dbReference>
<dbReference type="GO" id="GO:0016612">
    <property type="term" value="C:molybdenum-iron nitrogenase complex"/>
    <property type="evidence" value="ECO:0007669"/>
    <property type="project" value="InterPro"/>
</dbReference>
<dbReference type="GO" id="GO:0005524">
    <property type="term" value="F:ATP binding"/>
    <property type="evidence" value="ECO:0007669"/>
    <property type="project" value="UniProtKB-KW"/>
</dbReference>
<dbReference type="GO" id="GO:0051536">
    <property type="term" value="F:iron-sulfur cluster binding"/>
    <property type="evidence" value="ECO:0007669"/>
    <property type="project" value="UniProtKB-KW"/>
</dbReference>
<dbReference type="GO" id="GO:0046872">
    <property type="term" value="F:metal ion binding"/>
    <property type="evidence" value="ECO:0007669"/>
    <property type="project" value="UniProtKB-KW"/>
</dbReference>
<dbReference type="GO" id="GO:0016163">
    <property type="term" value="F:nitrogenase activity"/>
    <property type="evidence" value="ECO:0007669"/>
    <property type="project" value="UniProtKB-EC"/>
</dbReference>
<dbReference type="GO" id="GO:0009399">
    <property type="term" value="P:nitrogen fixation"/>
    <property type="evidence" value="ECO:0007669"/>
    <property type="project" value="UniProtKB-KW"/>
</dbReference>
<dbReference type="CDD" id="cd01974">
    <property type="entry name" value="Nitrogenase_MoFe_beta"/>
    <property type="match status" value="1"/>
</dbReference>
<dbReference type="Gene3D" id="3.40.50.1980">
    <property type="entry name" value="Nitrogenase molybdenum iron protein domain"/>
    <property type="match status" value="3"/>
</dbReference>
<dbReference type="Gene3D" id="1.20.89.10">
    <property type="entry name" value="Nitrogenase Molybdenum-iron Protein, subunit B, domain 4"/>
    <property type="match status" value="1"/>
</dbReference>
<dbReference type="InterPro" id="IPR050152">
    <property type="entry name" value="ChlB/BchB/BchZ"/>
</dbReference>
<dbReference type="InterPro" id="IPR000510">
    <property type="entry name" value="Nase/OxRdtase_comp1"/>
</dbReference>
<dbReference type="InterPro" id="IPR000318">
    <property type="entry name" value="Nase_comp1_CS"/>
</dbReference>
<dbReference type="InterPro" id="IPR005976">
    <property type="entry name" value="Nase_Mo-Fe_CF_bsu"/>
</dbReference>
<dbReference type="InterPro" id="IPR024564">
    <property type="entry name" value="Nase_Mo-Fe_CF_bsu_N"/>
</dbReference>
<dbReference type="NCBIfam" id="TIGR01286">
    <property type="entry name" value="nifK"/>
    <property type="match status" value="1"/>
</dbReference>
<dbReference type="PANTHER" id="PTHR33712">
    <property type="entry name" value="LIGHT-INDEPENDENT PROTOCHLOROPHYLLIDE REDUCTASE SUBUNIT B"/>
    <property type="match status" value="1"/>
</dbReference>
<dbReference type="PANTHER" id="PTHR33712:SF7">
    <property type="entry name" value="LIGHT-INDEPENDENT PROTOCHLOROPHYLLIDE REDUCTASE SUBUNIT B"/>
    <property type="match status" value="1"/>
</dbReference>
<dbReference type="Pfam" id="PF11844">
    <property type="entry name" value="DUF3364"/>
    <property type="match status" value="1"/>
</dbReference>
<dbReference type="Pfam" id="PF00148">
    <property type="entry name" value="Oxidored_nitro"/>
    <property type="match status" value="1"/>
</dbReference>
<dbReference type="SUPFAM" id="SSF53807">
    <property type="entry name" value="Helical backbone' metal receptor"/>
    <property type="match status" value="1"/>
</dbReference>
<dbReference type="PROSITE" id="PS00699">
    <property type="entry name" value="NITROGENASE_1_1"/>
    <property type="match status" value="1"/>
</dbReference>
<dbReference type="PROSITE" id="PS00090">
    <property type="entry name" value="NITROGENASE_1_2"/>
    <property type="match status" value="1"/>
</dbReference>
<organism>
    <name type="scientific">Rippkaea orientalis (strain PCC 8801 / RF-1)</name>
    <name type="common">Cyanothece sp. (strain PCC 8801)</name>
    <dbReference type="NCBI Taxonomy" id="41431"/>
    <lineage>
        <taxon>Bacteria</taxon>
        <taxon>Bacillati</taxon>
        <taxon>Cyanobacteriota</taxon>
        <taxon>Cyanophyceae</taxon>
        <taxon>Oscillatoriophycideae</taxon>
        <taxon>Chroococcales</taxon>
        <taxon>Aphanothecaceae</taxon>
        <taxon>Rippkaea</taxon>
        <taxon>Rippkaea orientalis</taxon>
    </lineage>
</organism>
<evidence type="ECO:0000250" key="1"/>
<evidence type="ECO:0000305" key="2"/>
<protein>
    <recommendedName>
        <fullName>Nitrogenase molybdenum-iron protein beta chain</fullName>
        <ecNumber>1.18.6.1</ecNumber>
    </recommendedName>
    <alternativeName>
        <fullName>Dinitrogenase</fullName>
    </alternativeName>
    <alternativeName>
        <fullName>Nitrogenase component I</fullName>
    </alternativeName>
</protein>
<keyword id="KW-0067">ATP-binding</keyword>
<keyword id="KW-0408">Iron</keyword>
<keyword id="KW-0411">Iron-sulfur</keyword>
<keyword id="KW-0479">Metal-binding</keyword>
<keyword id="KW-0535">Nitrogen fixation</keyword>
<keyword id="KW-0547">Nucleotide-binding</keyword>
<keyword id="KW-0560">Oxidoreductase</keyword>
<keyword id="KW-1185">Reference proteome</keyword>
<proteinExistence type="inferred from homology"/>